<reference key="1">
    <citation type="journal article" date="2002" name="Proc. Natl. Acad. Sci. U.S.A.">
        <title>Genome sequence and comparative microarray analysis of serotype M18 group A Streptococcus strains associated with acute rheumatic fever outbreaks.</title>
        <authorList>
            <person name="Smoot J.C."/>
            <person name="Barbian K.D."/>
            <person name="Van Gompel J.J."/>
            <person name="Smoot L.M."/>
            <person name="Chaussee M.S."/>
            <person name="Sylva G.L."/>
            <person name="Sturdevant D.E."/>
            <person name="Ricklefs S.M."/>
            <person name="Porcella S.F."/>
            <person name="Parkins L.D."/>
            <person name="Beres S.B."/>
            <person name="Campbell D.S."/>
            <person name="Smith T.M."/>
            <person name="Zhang Q."/>
            <person name="Kapur V."/>
            <person name="Daly J.A."/>
            <person name="Veasy L.G."/>
            <person name="Musser J.M."/>
        </authorList>
    </citation>
    <scope>NUCLEOTIDE SEQUENCE [LARGE SCALE GENOMIC DNA]</scope>
    <source>
        <strain>MGAS8232</strain>
    </source>
</reference>
<gene>
    <name evidence="1" type="primary">nusB</name>
    <name type="ordered locus">spyM18_1884</name>
</gene>
<proteinExistence type="inferred from homology"/>
<dbReference type="EMBL" id="AE009949">
    <property type="protein sequence ID" value="AAL98389.1"/>
    <property type="molecule type" value="Genomic_DNA"/>
</dbReference>
<dbReference type="RefSeq" id="WP_002988501.1">
    <property type="nucleotide sequence ID" value="NC_003485.1"/>
</dbReference>
<dbReference type="SMR" id="P65585"/>
<dbReference type="GeneID" id="69900353"/>
<dbReference type="KEGG" id="spm:spyM18_1884"/>
<dbReference type="HOGENOM" id="CLU_087843_3_2_9"/>
<dbReference type="GO" id="GO:0005829">
    <property type="term" value="C:cytosol"/>
    <property type="evidence" value="ECO:0007669"/>
    <property type="project" value="TreeGrafter"/>
</dbReference>
<dbReference type="GO" id="GO:0003723">
    <property type="term" value="F:RNA binding"/>
    <property type="evidence" value="ECO:0007669"/>
    <property type="project" value="UniProtKB-UniRule"/>
</dbReference>
<dbReference type="GO" id="GO:0006353">
    <property type="term" value="P:DNA-templated transcription termination"/>
    <property type="evidence" value="ECO:0007669"/>
    <property type="project" value="UniProtKB-UniRule"/>
</dbReference>
<dbReference type="GO" id="GO:0031564">
    <property type="term" value="P:transcription antitermination"/>
    <property type="evidence" value="ECO:0007669"/>
    <property type="project" value="UniProtKB-KW"/>
</dbReference>
<dbReference type="Gene3D" id="1.10.940.10">
    <property type="entry name" value="NusB-like"/>
    <property type="match status" value="1"/>
</dbReference>
<dbReference type="HAMAP" id="MF_00073">
    <property type="entry name" value="NusB"/>
    <property type="match status" value="1"/>
</dbReference>
<dbReference type="InterPro" id="IPR035926">
    <property type="entry name" value="NusB-like_sf"/>
</dbReference>
<dbReference type="InterPro" id="IPR011605">
    <property type="entry name" value="NusB_fam"/>
</dbReference>
<dbReference type="InterPro" id="IPR006027">
    <property type="entry name" value="NusB_RsmB_TIM44"/>
</dbReference>
<dbReference type="NCBIfam" id="TIGR01951">
    <property type="entry name" value="nusB"/>
    <property type="match status" value="1"/>
</dbReference>
<dbReference type="NCBIfam" id="NF001223">
    <property type="entry name" value="PRK00202.1-1"/>
    <property type="match status" value="1"/>
</dbReference>
<dbReference type="PANTHER" id="PTHR11078:SF3">
    <property type="entry name" value="ANTITERMINATION NUSB DOMAIN-CONTAINING PROTEIN"/>
    <property type="match status" value="1"/>
</dbReference>
<dbReference type="PANTHER" id="PTHR11078">
    <property type="entry name" value="N UTILIZATION SUBSTANCE PROTEIN B-RELATED"/>
    <property type="match status" value="1"/>
</dbReference>
<dbReference type="Pfam" id="PF01029">
    <property type="entry name" value="NusB"/>
    <property type="match status" value="1"/>
</dbReference>
<dbReference type="SUPFAM" id="SSF48013">
    <property type="entry name" value="NusB-like"/>
    <property type="match status" value="1"/>
</dbReference>
<feature type="chain" id="PRO_0000176595" description="Transcription antitermination protein NusB">
    <location>
        <begin position="1"/>
        <end position="150"/>
    </location>
</feature>
<protein>
    <recommendedName>
        <fullName evidence="1">Transcription antitermination protein NusB</fullName>
    </recommendedName>
    <alternativeName>
        <fullName evidence="1">Antitermination factor NusB</fullName>
    </alternativeName>
</protein>
<keyword id="KW-0694">RNA-binding</keyword>
<keyword id="KW-0804">Transcription</keyword>
<keyword id="KW-0889">Transcription antitermination</keyword>
<keyword id="KW-0805">Transcription regulation</keyword>
<sequence>MTNSFQNSRRDLRERAFQALFNIEMGAELLAASQFAYGYDKVTGEDAQVLELPIFLLSLVTGVNNHKEELDNLISTHLKKGWSLERLTLTDKTLLRLGLFEIKYFDETPDRVALNEIIEVAKKYSDETSAKFINGLLSQYVSEAPSANKS</sequence>
<evidence type="ECO:0000255" key="1">
    <source>
        <dbReference type="HAMAP-Rule" id="MF_00073"/>
    </source>
</evidence>
<accession>P65585</accession>
<accession>Q8NZJ4</accession>
<organism>
    <name type="scientific">Streptococcus pyogenes serotype M18 (strain MGAS8232)</name>
    <dbReference type="NCBI Taxonomy" id="186103"/>
    <lineage>
        <taxon>Bacteria</taxon>
        <taxon>Bacillati</taxon>
        <taxon>Bacillota</taxon>
        <taxon>Bacilli</taxon>
        <taxon>Lactobacillales</taxon>
        <taxon>Streptococcaceae</taxon>
        <taxon>Streptococcus</taxon>
    </lineage>
</organism>
<name>NUSB_STRP8</name>
<comment type="function">
    <text evidence="1">Involved in transcription antitermination. Required for transcription of ribosomal RNA (rRNA) genes. Binds specifically to the boxA antiterminator sequence of the ribosomal RNA (rrn) operons.</text>
</comment>
<comment type="similarity">
    <text evidence="1">Belongs to the NusB family.</text>
</comment>